<gene>
    <name evidence="1" type="primary">cysS</name>
    <name type="ordered locus">Pput_2786</name>
</gene>
<proteinExistence type="inferred from homology"/>
<dbReference type="EC" id="6.1.1.16" evidence="1"/>
<dbReference type="EMBL" id="CP000712">
    <property type="protein sequence ID" value="ABQ78918.1"/>
    <property type="molecule type" value="Genomic_DNA"/>
</dbReference>
<dbReference type="SMR" id="A5W458"/>
<dbReference type="KEGG" id="ppf:Pput_2786"/>
<dbReference type="eggNOG" id="COG0215">
    <property type="taxonomic scope" value="Bacteria"/>
</dbReference>
<dbReference type="HOGENOM" id="CLU_013528_0_1_6"/>
<dbReference type="GO" id="GO:0005829">
    <property type="term" value="C:cytosol"/>
    <property type="evidence" value="ECO:0007669"/>
    <property type="project" value="TreeGrafter"/>
</dbReference>
<dbReference type="GO" id="GO:0005524">
    <property type="term" value="F:ATP binding"/>
    <property type="evidence" value="ECO:0007669"/>
    <property type="project" value="UniProtKB-UniRule"/>
</dbReference>
<dbReference type="GO" id="GO:0004817">
    <property type="term" value="F:cysteine-tRNA ligase activity"/>
    <property type="evidence" value="ECO:0007669"/>
    <property type="project" value="UniProtKB-UniRule"/>
</dbReference>
<dbReference type="GO" id="GO:0008270">
    <property type="term" value="F:zinc ion binding"/>
    <property type="evidence" value="ECO:0007669"/>
    <property type="project" value="UniProtKB-UniRule"/>
</dbReference>
<dbReference type="GO" id="GO:0006423">
    <property type="term" value="P:cysteinyl-tRNA aminoacylation"/>
    <property type="evidence" value="ECO:0007669"/>
    <property type="project" value="UniProtKB-UniRule"/>
</dbReference>
<dbReference type="CDD" id="cd07963">
    <property type="entry name" value="Anticodon_Ia_Cys"/>
    <property type="match status" value="1"/>
</dbReference>
<dbReference type="CDD" id="cd00672">
    <property type="entry name" value="CysRS_core"/>
    <property type="match status" value="1"/>
</dbReference>
<dbReference type="FunFam" id="3.40.50.620:FF:000009">
    <property type="entry name" value="Cysteine--tRNA ligase"/>
    <property type="match status" value="1"/>
</dbReference>
<dbReference type="Gene3D" id="1.20.120.1910">
    <property type="entry name" value="Cysteine-tRNA ligase, C-terminal anti-codon recognition domain"/>
    <property type="match status" value="1"/>
</dbReference>
<dbReference type="Gene3D" id="3.40.50.620">
    <property type="entry name" value="HUPs"/>
    <property type="match status" value="1"/>
</dbReference>
<dbReference type="HAMAP" id="MF_00041">
    <property type="entry name" value="Cys_tRNA_synth"/>
    <property type="match status" value="1"/>
</dbReference>
<dbReference type="InterPro" id="IPR015803">
    <property type="entry name" value="Cys-tRNA-ligase"/>
</dbReference>
<dbReference type="InterPro" id="IPR015273">
    <property type="entry name" value="Cys-tRNA-synt_Ia_DALR"/>
</dbReference>
<dbReference type="InterPro" id="IPR024909">
    <property type="entry name" value="Cys-tRNA/MSH_ligase"/>
</dbReference>
<dbReference type="InterPro" id="IPR056411">
    <property type="entry name" value="CysS_C"/>
</dbReference>
<dbReference type="InterPro" id="IPR014729">
    <property type="entry name" value="Rossmann-like_a/b/a_fold"/>
</dbReference>
<dbReference type="InterPro" id="IPR032678">
    <property type="entry name" value="tRNA-synt_1_cat_dom"/>
</dbReference>
<dbReference type="InterPro" id="IPR009080">
    <property type="entry name" value="tRNAsynth_Ia_anticodon-bd"/>
</dbReference>
<dbReference type="NCBIfam" id="TIGR00435">
    <property type="entry name" value="cysS"/>
    <property type="match status" value="1"/>
</dbReference>
<dbReference type="PANTHER" id="PTHR10890:SF3">
    <property type="entry name" value="CYSTEINE--TRNA LIGASE, CYTOPLASMIC"/>
    <property type="match status" value="1"/>
</dbReference>
<dbReference type="PANTHER" id="PTHR10890">
    <property type="entry name" value="CYSTEINYL-TRNA SYNTHETASE"/>
    <property type="match status" value="1"/>
</dbReference>
<dbReference type="Pfam" id="PF23493">
    <property type="entry name" value="CysS_C"/>
    <property type="match status" value="1"/>
</dbReference>
<dbReference type="Pfam" id="PF09190">
    <property type="entry name" value="DALR_2"/>
    <property type="match status" value="1"/>
</dbReference>
<dbReference type="Pfam" id="PF01406">
    <property type="entry name" value="tRNA-synt_1e"/>
    <property type="match status" value="1"/>
</dbReference>
<dbReference type="PRINTS" id="PR00983">
    <property type="entry name" value="TRNASYNTHCYS"/>
</dbReference>
<dbReference type="SMART" id="SM00840">
    <property type="entry name" value="DALR_2"/>
    <property type="match status" value="1"/>
</dbReference>
<dbReference type="SUPFAM" id="SSF47323">
    <property type="entry name" value="Anticodon-binding domain of a subclass of class I aminoacyl-tRNA synthetases"/>
    <property type="match status" value="1"/>
</dbReference>
<dbReference type="SUPFAM" id="SSF52374">
    <property type="entry name" value="Nucleotidylyl transferase"/>
    <property type="match status" value="1"/>
</dbReference>
<evidence type="ECO:0000255" key="1">
    <source>
        <dbReference type="HAMAP-Rule" id="MF_00041"/>
    </source>
</evidence>
<keyword id="KW-0030">Aminoacyl-tRNA synthetase</keyword>
<keyword id="KW-0067">ATP-binding</keyword>
<keyword id="KW-0963">Cytoplasm</keyword>
<keyword id="KW-0436">Ligase</keyword>
<keyword id="KW-0479">Metal-binding</keyword>
<keyword id="KW-0547">Nucleotide-binding</keyword>
<keyword id="KW-0648">Protein biosynthesis</keyword>
<keyword id="KW-0862">Zinc</keyword>
<reference key="1">
    <citation type="submission" date="2007-05" db="EMBL/GenBank/DDBJ databases">
        <title>Complete sequence of Pseudomonas putida F1.</title>
        <authorList>
            <consortium name="US DOE Joint Genome Institute"/>
            <person name="Copeland A."/>
            <person name="Lucas S."/>
            <person name="Lapidus A."/>
            <person name="Barry K."/>
            <person name="Detter J.C."/>
            <person name="Glavina del Rio T."/>
            <person name="Hammon N."/>
            <person name="Israni S."/>
            <person name="Dalin E."/>
            <person name="Tice H."/>
            <person name="Pitluck S."/>
            <person name="Chain P."/>
            <person name="Malfatti S."/>
            <person name="Shin M."/>
            <person name="Vergez L."/>
            <person name="Schmutz J."/>
            <person name="Larimer F."/>
            <person name="Land M."/>
            <person name="Hauser L."/>
            <person name="Kyrpides N."/>
            <person name="Lykidis A."/>
            <person name="Parales R."/>
            <person name="Richardson P."/>
        </authorList>
    </citation>
    <scope>NUCLEOTIDE SEQUENCE [LARGE SCALE GENOMIC DNA]</scope>
    <source>
        <strain>ATCC 700007 / DSM 6899 / JCM 31910 / BCRC 17059 / LMG 24140 / F1</strain>
    </source>
</reference>
<comment type="catalytic activity">
    <reaction evidence="1">
        <text>tRNA(Cys) + L-cysteine + ATP = L-cysteinyl-tRNA(Cys) + AMP + diphosphate</text>
        <dbReference type="Rhea" id="RHEA:17773"/>
        <dbReference type="Rhea" id="RHEA-COMP:9661"/>
        <dbReference type="Rhea" id="RHEA-COMP:9679"/>
        <dbReference type="ChEBI" id="CHEBI:30616"/>
        <dbReference type="ChEBI" id="CHEBI:33019"/>
        <dbReference type="ChEBI" id="CHEBI:35235"/>
        <dbReference type="ChEBI" id="CHEBI:78442"/>
        <dbReference type="ChEBI" id="CHEBI:78517"/>
        <dbReference type="ChEBI" id="CHEBI:456215"/>
        <dbReference type="EC" id="6.1.1.16"/>
    </reaction>
</comment>
<comment type="cofactor">
    <cofactor evidence="1">
        <name>Zn(2+)</name>
        <dbReference type="ChEBI" id="CHEBI:29105"/>
    </cofactor>
    <text evidence="1">Binds 1 zinc ion per subunit.</text>
</comment>
<comment type="subunit">
    <text evidence="1">Monomer.</text>
</comment>
<comment type="subcellular location">
    <subcellularLocation>
        <location evidence="1">Cytoplasm</location>
    </subcellularLocation>
</comment>
<comment type="similarity">
    <text evidence="1">Belongs to the class-I aminoacyl-tRNA synthetase family.</text>
</comment>
<accession>A5W458</accession>
<feature type="chain" id="PRO_0000332880" description="Cysteine--tRNA ligase">
    <location>
        <begin position="1"/>
        <end position="460"/>
    </location>
</feature>
<feature type="short sequence motif" description="'HIGH' region">
    <location>
        <begin position="30"/>
        <end position="40"/>
    </location>
</feature>
<feature type="short sequence motif" description="'KMSKS' region">
    <location>
        <begin position="266"/>
        <end position="270"/>
    </location>
</feature>
<feature type="binding site" evidence="1">
    <location>
        <position position="28"/>
    </location>
    <ligand>
        <name>Zn(2+)</name>
        <dbReference type="ChEBI" id="CHEBI:29105"/>
    </ligand>
</feature>
<feature type="binding site" evidence="1">
    <location>
        <position position="209"/>
    </location>
    <ligand>
        <name>Zn(2+)</name>
        <dbReference type="ChEBI" id="CHEBI:29105"/>
    </ligand>
</feature>
<feature type="binding site" evidence="1">
    <location>
        <position position="234"/>
    </location>
    <ligand>
        <name>Zn(2+)</name>
        <dbReference type="ChEBI" id="CHEBI:29105"/>
    </ligand>
</feature>
<feature type="binding site" evidence="1">
    <location>
        <position position="238"/>
    </location>
    <ligand>
        <name>Zn(2+)</name>
        <dbReference type="ChEBI" id="CHEBI:29105"/>
    </ligand>
</feature>
<feature type="binding site" evidence="1">
    <location>
        <position position="269"/>
    </location>
    <ligand>
        <name>ATP</name>
        <dbReference type="ChEBI" id="CHEBI:30616"/>
    </ligand>
</feature>
<organism>
    <name type="scientific">Pseudomonas putida (strain ATCC 700007 / DSM 6899 / JCM 31910 / BCRC 17059 / LMG 24140 / F1)</name>
    <dbReference type="NCBI Taxonomy" id="351746"/>
    <lineage>
        <taxon>Bacteria</taxon>
        <taxon>Pseudomonadati</taxon>
        <taxon>Pseudomonadota</taxon>
        <taxon>Gammaproteobacteria</taxon>
        <taxon>Pseudomonadales</taxon>
        <taxon>Pseudomonadaceae</taxon>
        <taxon>Pseudomonas</taxon>
    </lineage>
</organism>
<sequence>MLTIYNTLSKTKEVFKPLDGNKVRMYVCGMTVYDYCHLGHGRSMVAFDLVTRWLRKSGYELTYVRNITDIDDKIINRANENGETFDALTARMIDAMHEDERRLNILPPDQEPRATDHIAGMHAMIQTLIDKGYAYAPGNGDVYYRVGKFVGYGKLSRKKIEDLRIGARIEVDEAKQDPLDFVLWKGVKPGEPSWESPWGPGRPGWHIECSVMSTRCLGESFDIHGGGSDLEFPHHENEIAQSEAATGKQYANAWMHCGMIRINGEKMSKSLNNFFTIRDVLEKYHPEVVRYLLVASHYRSAINYSEDSLRDAKGALERFYHALRGLPRVAAKGGEAFVERFSVAMNDDFGTPEACAVLFDLVREINRLRDSDPEAAAGLAGRLRELGDVLGVLQLEADDFLRAGAEGKVDAAEVEGLIQARLQARADKNWAESDRIRDQLTAMGVVLEDSKGTTTWRLAD</sequence>
<name>SYC_PSEP1</name>
<protein>
    <recommendedName>
        <fullName evidence="1">Cysteine--tRNA ligase</fullName>
        <ecNumber evidence="1">6.1.1.16</ecNumber>
    </recommendedName>
    <alternativeName>
        <fullName evidence="1">Cysteinyl-tRNA synthetase</fullName>
        <shortName evidence="1">CysRS</shortName>
    </alternativeName>
</protein>